<reference key="1">
    <citation type="submission" date="2007-05" db="EMBL/GenBank/DDBJ databases">
        <title>Complete sequence of Thermotoga petrophila RKU-1.</title>
        <authorList>
            <consortium name="US DOE Joint Genome Institute"/>
            <person name="Copeland A."/>
            <person name="Lucas S."/>
            <person name="Lapidus A."/>
            <person name="Barry K."/>
            <person name="Glavina del Rio T."/>
            <person name="Dalin E."/>
            <person name="Tice H."/>
            <person name="Pitluck S."/>
            <person name="Sims D."/>
            <person name="Brettin T."/>
            <person name="Bruce D."/>
            <person name="Detter J.C."/>
            <person name="Han C."/>
            <person name="Tapia R."/>
            <person name="Schmutz J."/>
            <person name="Larimer F."/>
            <person name="Land M."/>
            <person name="Hauser L."/>
            <person name="Kyrpides N."/>
            <person name="Mikhailova N."/>
            <person name="Nelson K."/>
            <person name="Gogarten J.P."/>
            <person name="Noll K."/>
            <person name="Richardson P."/>
        </authorList>
    </citation>
    <scope>NUCLEOTIDE SEQUENCE [LARGE SCALE GENOMIC DNA]</scope>
    <source>
        <strain>ATCC BAA-488 / DSM 13995 / JCM 10881 / RKU-1</strain>
    </source>
</reference>
<sequence length="71" mass="7986">MKKGIHPEMKLVTVKCACGAEHTFYTTVDNIRIDVCSNCHPFYTSGGKGGVLIVDTEGRVEKFRRKYGDNY</sequence>
<accession>A5ILC5</accession>
<keyword id="KW-0479">Metal-binding</keyword>
<keyword id="KW-0687">Ribonucleoprotein</keyword>
<keyword id="KW-0689">Ribosomal protein</keyword>
<keyword id="KW-0694">RNA-binding</keyword>
<keyword id="KW-0699">rRNA-binding</keyword>
<keyword id="KW-0862">Zinc</keyword>
<protein>
    <recommendedName>
        <fullName evidence="1">Large ribosomal subunit protein bL31</fullName>
    </recommendedName>
    <alternativeName>
        <fullName evidence="2">50S ribosomal protein L31</fullName>
    </alternativeName>
</protein>
<gene>
    <name evidence="1" type="primary">rpmE</name>
    <name type="ordered locus">Tpet_0980</name>
</gene>
<evidence type="ECO:0000255" key="1">
    <source>
        <dbReference type="HAMAP-Rule" id="MF_00501"/>
    </source>
</evidence>
<evidence type="ECO:0000305" key="2"/>
<dbReference type="EMBL" id="CP000702">
    <property type="protein sequence ID" value="ABQ46998.1"/>
    <property type="molecule type" value="Genomic_DNA"/>
</dbReference>
<dbReference type="RefSeq" id="WP_004082200.1">
    <property type="nucleotide sequence ID" value="NC_009486.1"/>
</dbReference>
<dbReference type="STRING" id="390874.Tpet_0980"/>
<dbReference type="KEGG" id="tpt:Tpet_0980"/>
<dbReference type="eggNOG" id="COG0254">
    <property type="taxonomic scope" value="Bacteria"/>
</dbReference>
<dbReference type="HOGENOM" id="CLU_114306_4_3_0"/>
<dbReference type="Proteomes" id="UP000006558">
    <property type="component" value="Chromosome"/>
</dbReference>
<dbReference type="GO" id="GO:1990904">
    <property type="term" value="C:ribonucleoprotein complex"/>
    <property type="evidence" value="ECO:0007669"/>
    <property type="project" value="UniProtKB-KW"/>
</dbReference>
<dbReference type="GO" id="GO:0005840">
    <property type="term" value="C:ribosome"/>
    <property type="evidence" value="ECO:0007669"/>
    <property type="project" value="UniProtKB-KW"/>
</dbReference>
<dbReference type="GO" id="GO:0046872">
    <property type="term" value="F:metal ion binding"/>
    <property type="evidence" value="ECO:0007669"/>
    <property type="project" value="UniProtKB-KW"/>
</dbReference>
<dbReference type="GO" id="GO:0019843">
    <property type="term" value="F:rRNA binding"/>
    <property type="evidence" value="ECO:0007669"/>
    <property type="project" value="UniProtKB-KW"/>
</dbReference>
<dbReference type="GO" id="GO:0003735">
    <property type="term" value="F:structural constituent of ribosome"/>
    <property type="evidence" value="ECO:0007669"/>
    <property type="project" value="InterPro"/>
</dbReference>
<dbReference type="GO" id="GO:0006412">
    <property type="term" value="P:translation"/>
    <property type="evidence" value="ECO:0007669"/>
    <property type="project" value="UniProtKB-UniRule"/>
</dbReference>
<dbReference type="Gene3D" id="4.10.830.30">
    <property type="entry name" value="Ribosomal protein L31"/>
    <property type="match status" value="1"/>
</dbReference>
<dbReference type="HAMAP" id="MF_00501">
    <property type="entry name" value="Ribosomal_bL31_1"/>
    <property type="match status" value="1"/>
</dbReference>
<dbReference type="InterPro" id="IPR034704">
    <property type="entry name" value="Ribosomal_bL28/bL31-like_sf"/>
</dbReference>
<dbReference type="InterPro" id="IPR002150">
    <property type="entry name" value="Ribosomal_bL31"/>
</dbReference>
<dbReference type="InterPro" id="IPR027491">
    <property type="entry name" value="Ribosomal_bL31_A"/>
</dbReference>
<dbReference type="InterPro" id="IPR042105">
    <property type="entry name" value="Ribosomal_bL31_sf"/>
</dbReference>
<dbReference type="NCBIfam" id="TIGR00105">
    <property type="entry name" value="L31"/>
    <property type="match status" value="1"/>
</dbReference>
<dbReference type="NCBIfam" id="NF000612">
    <property type="entry name" value="PRK00019.1"/>
    <property type="match status" value="1"/>
</dbReference>
<dbReference type="PANTHER" id="PTHR33280">
    <property type="entry name" value="50S RIBOSOMAL PROTEIN L31, CHLOROPLASTIC"/>
    <property type="match status" value="1"/>
</dbReference>
<dbReference type="PANTHER" id="PTHR33280:SF1">
    <property type="entry name" value="LARGE RIBOSOMAL SUBUNIT PROTEIN BL31C"/>
    <property type="match status" value="1"/>
</dbReference>
<dbReference type="Pfam" id="PF01197">
    <property type="entry name" value="Ribosomal_L31"/>
    <property type="match status" value="1"/>
</dbReference>
<dbReference type="PRINTS" id="PR01249">
    <property type="entry name" value="RIBOSOMALL31"/>
</dbReference>
<dbReference type="SUPFAM" id="SSF143800">
    <property type="entry name" value="L28p-like"/>
    <property type="match status" value="1"/>
</dbReference>
<dbReference type="PROSITE" id="PS01143">
    <property type="entry name" value="RIBOSOMAL_L31"/>
    <property type="match status" value="1"/>
</dbReference>
<proteinExistence type="inferred from homology"/>
<comment type="function">
    <text evidence="1">Binds the 23S rRNA.</text>
</comment>
<comment type="cofactor">
    <cofactor evidence="1">
        <name>Zn(2+)</name>
        <dbReference type="ChEBI" id="CHEBI:29105"/>
    </cofactor>
    <text evidence="1">Binds 1 zinc ion per subunit.</text>
</comment>
<comment type="subunit">
    <text evidence="1">Part of the 50S ribosomal subunit.</text>
</comment>
<comment type="similarity">
    <text evidence="1">Belongs to the bacterial ribosomal protein bL31 family. Type A subfamily.</text>
</comment>
<name>RL31_THEP1</name>
<feature type="chain" id="PRO_1000126756" description="Large ribosomal subunit protein bL31">
    <location>
        <begin position="1"/>
        <end position="71"/>
    </location>
</feature>
<feature type="binding site" evidence="1">
    <location>
        <position position="16"/>
    </location>
    <ligand>
        <name>Zn(2+)</name>
        <dbReference type="ChEBI" id="CHEBI:29105"/>
    </ligand>
</feature>
<feature type="binding site" evidence="1">
    <location>
        <position position="18"/>
    </location>
    <ligand>
        <name>Zn(2+)</name>
        <dbReference type="ChEBI" id="CHEBI:29105"/>
    </ligand>
</feature>
<feature type="binding site" evidence="1">
    <location>
        <position position="36"/>
    </location>
    <ligand>
        <name>Zn(2+)</name>
        <dbReference type="ChEBI" id="CHEBI:29105"/>
    </ligand>
</feature>
<feature type="binding site" evidence="1">
    <location>
        <position position="39"/>
    </location>
    <ligand>
        <name>Zn(2+)</name>
        <dbReference type="ChEBI" id="CHEBI:29105"/>
    </ligand>
</feature>
<organism>
    <name type="scientific">Thermotoga petrophila (strain ATCC BAA-488 / DSM 13995 / JCM 10881 / RKU-1)</name>
    <dbReference type="NCBI Taxonomy" id="390874"/>
    <lineage>
        <taxon>Bacteria</taxon>
        <taxon>Thermotogati</taxon>
        <taxon>Thermotogota</taxon>
        <taxon>Thermotogae</taxon>
        <taxon>Thermotogales</taxon>
        <taxon>Thermotogaceae</taxon>
        <taxon>Thermotoga</taxon>
    </lineage>
</organism>